<keyword id="KW-0002">3D-structure</keyword>
<keyword id="KW-0328">Glycosyltransferase</keyword>
<keyword id="KW-0479">Metal-binding</keyword>
<keyword id="KW-0630">Potassium</keyword>
<keyword id="KW-0808">Transferase</keyword>
<accession>Q5HE64</accession>
<feature type="chain" id="PRO_0000269533" description="Pyrimidine-nucleoside phosphorylase">
    <location>
        <begin position="1"/>
        <end position="433"/>
    </location>
</feature>
<feature type="binding site" evidence="1">
    <location>
        <begin position="81"/>
        <end position="83"/>
    </location>
    <ligand>
        <name>phosphate</name>
        <dbReference type="ChEBI" id="CHEBI:43474"/>
    </ligand>
</feature>
<feature type="binding site" evidence="1">
    <location>
        <position position="88"/>
    </location>
    <ligand>
        <name>K(+)</name>
        <dbReference type="ChEBI" id="CHEBI:29103"/>
    </ligand>
</feature>
<feature type="binding site" evidence="1">
    <location>
        <position position="90"/>
    </location>
    <ligand>
        <name>K(+)</name>
        <dbReference type="ChEBI" id="CHEBI:29103"/>
    </ligand>
</feature>
<feature type="binding site" evidence="1">
    <location>
        <position position="92"/>
    </location>
    <ligand>
        <name>phosphate</name>
        <dbReference type="ChEBI" id="CHEBI:43474"/>
    </ligand>
</feature>
<feature type="binding site" evidence="1">
    <location>
        <begin position="108"/>
        <end position="110"/>
    </location>
    <ligand>
        <name>phosphate</name>
        <dbReference type="ChEBI" id="CHEBI:43474"/>
    </ligand>
</feature>
<feature type="binding site" evidence="1">
    <location>
        <position position="120"/>
    </location>
    <ligand>
        <name>phosphate</name>
        <dbReference type="ChEBI" id="CHEBI:43474"/>
    </ligand>
</feature>
<feature type="binding site" evidence="1">
    <location>
        <position position="168"/>
    </location>
    <ligand>
        <name>substrate</name>
    </ligand>
</feature>
<feature type="binding site" evidence="1">
    <location>
        <position position="187"/>
    </location>
    <ligand>
        <name>substrate</name>
    </ligand>
</feature>
<feature type="binding site" evidence="1">
    <location>
        <position position="243"/>
    </location>
    <ligand>
        <name>K(+)</name>
        <dbReference type="ChEBI" id="CHEBI:29103"/>
    </ligand>
</feature>
<feature type="binding site" evidence="1">
    <location>
        <position position="246"/>
    </location>
    <ligand>
        <name>K(+)</name>
        <dbReference type="ChEBI" id="CHEBI:29103"/>
    </ligand>
</feature>
<feature type="binding site" evidence="1">
    <location>
        <position position="255"/>
    </location>
    <ligand>
        <name>K(+)</name>
        <dbReference type="ChEBI" id="CHEBI:29103"/>
    </ligand>
</feature>
<feature type="helix" evidence="3">
    <location>
        <begin position="1"/>
        <end position="11"/>
    </location>
</feature>
<feature type="helix" evidence="3">
    <location>
        <begin position="18"/>
        <end position="29"/>
    </location>
</feature>
<feature type="helix" evidence="3">
    <location>
        <begin position="35"/>
        <end position="48"/>
    </location>
</feature>
<feature type="helix" evidence="3">
    <location>
        <begin position="52"/>
        <end position="63"/>
    </location>
</feature>
<feature type="strand" evidence="3">
    <location>
        <begin position="79"/>
        <end position="83"/>
    </location>
</feature>
<feature type="helix" evidence="3">
    <location>
        <begin position="91"/>
        <end position="101"/>
    </location>
</feature>
<feature type="strand" evidence="3">
    <location>
        <begin position="106"/>
        <end position="109"/>
    </location>
</feature>
<feature type="strand" evidence="3">
    <location>
        <begin position="114"/>
        <end position="117"/>
    </location>
</feature>
<feature type="helix" evidence="3">
    <location>
        <begin position="120"/>
        <end position="124"/>
    </location>
</feature>
<feature type="helix" evidence="3">
    <location>
        <begin position="136"/>
        <end position="146"/>
    </location>
</feature>
<feature type="strand" evidence="3">
    <location>
        <begin position="147"/>
        <end position="151"/>
    </location>
</feature>
<feature type="strand" evidence="3">
    <location>
        <begin position="155"/>
        <end position="157"/>
    </location>
</feature>
<feature type="helix" evidence="3">
    <location>
        <begin position="159"/>
        <end position="169"/>
    </location>
</feature>
<feature type="turn" evidence="3">
    <location>
        <begin position="170"/>
        <end position="172"/>
    </location>
</feature>
<feature type="helix" evidence="3">
    <location>
        <begin position="177"/>
        <end position="190"/>
    </location>
</feature>
<feature type="strand" evidence="3">
    <location>
        <begin position="194"/>
        <end position="203"/>
    </location>
</feature>
<feature type="strand" evidence="3">
    <location>
        <begin position="206"/>
        <end position="208"/>
    </location>
</feature>
<feature type="helix" evidence="3">
    <location>
        <begin position="211"/>
        <end position="228"/>
    </location>
</feature>
<feature type="strand" evidence="3">
    <location>
        <begin position="232"/>
        <end position="238"/>
    </location>
</feature>
<feature type="strand" evidence="3">
    <location>
        <begin position="243"/>
        <end position="249"/>
    </location>
</feature>
<feature type="helix" evidence="3">
    <location>
        <begin position="250"/>
        <end position="260"/>
    </location>
</feature>
<feature type="helix" evidence="3">
    <location>
        <begin position="266"/>
        <end position="282"/>
    </location>
</feature>
<feature type="helix" evidence="3">
    <location>
        <begin position="289"/>
        <end position="301"/>
    </location>
</feature>
<feature type="helix" evidence="3">
    <location>
        <begin position="304"/>
        <end position="315"/>
    </location>
</feature>
<feature type="helix" evidence="3">
    <location>
        <begin position="321"/>
        <end position="324"/>
    </location>
</feature>
<feature type="helix" evidence="3">
    <location>
        <begin position="326"/>
        <end position="328"/>
    </location>
</feature>
<feature type="strand" evidence="3">
    <location>
        <begin position="333"/>
        <end position="339"/>
    </location>
</feature>
<feature type="strand" evidence="3">
    <location>
        <begin position="344"/>
        <end position="349"/>
    </location>
</feature>
<feature type="helix" evidence="3">
    <location>
        <begin position="351"/>
        <end position="360"/>
    </location>
</feature>
<feature type="turn" evidence="3">
    <location>
        <begin position="361"/>
        <end position="363"/>
    </location>
</feature>
<feature type="strand" evidence="3">
    <location>
        <begin position="377"/>
        <end position="381"/>
    </location>
</feature>
<feature type="strand" evidence="3">
    <location>
        <begin position="392"/>
        <end position="402"/>
    </location>
</feature>
<feature type="helix" evidence="3">
    <location>
        <begin position="405"/>
        <end position="414"/>
    </location>
</feature>
<feature type="strand" evidence="3">
    <location>
        <begin position="415"/>
        <end position="419"/>
    </location>
</feature>
<feature type="strand" evidence="3">
    <location>
        <begin position="426"/>
        <end position="431"/>
    </location>
</feature>
<sequence>MRMIDIIEKKRDGHTLTTEEINFFIGGYVKGDIPDYQASSLAMAIYFQDMNDDERAALTMAMVNSGDMIDLSDIKGVKVDKHSTGGVGDTTTLVLAPLVAAVDVPVAKMSGRGLGHTGGTIDKLEAIDGFHVEIDEATFVKLVNENKVAVVGQSGNLTPADKKLYALRDVTGTVNSIPLIASSIMSKKIAAGADAIVLDVKTGSGAFMKTLEDAEALAHAMVRIGNNVGRNTMAIISDMNQPLGRAIGNALELQEAIDTLKGQGPKDLTELVLTLGSQMVVLANKAETLEEARALLIEAINSGAALEKFKTFIKNQGGDETVIDHPERLPQAQYQIEYKAKKSGYVTELVSNDIGVASMMLGAGRLTKEDDIDLAVGIVLNKKIGDKVEEGESLLTIHSNRQDVDDVVKKLDSSITIADHVVSPTLIHKIITE</sequence>
<gene>
    <name type="primary">pdp</name>
    <name type="synonym">pyn</name>
    <name type="ordered locus">SACOL2128</name>
</gene>
<protein>
    <recommendedName>
        <fullName>Pyrimidine-nucleoside phosphorylase</fullName>
        <shortName>PYNP</shortName>
        <shortName>Py-NPase</shortName>
        <ecNumber>2.4.2.2</ecNumber>
    </recommendedName>
</protein>
<proteinExistence type="evidence at protein level"/>
<reference key="1">
    <citation type="journal article" date="2005" name="J. Bacteriol.">
        <title>Insights on evolution of virulence and resistance from the complete genome analysis of an early methicillin-resistant Staphylococcus aureus strain and a biofilm-producing methicillin-resistant Staphylococcus epidermidis strain.</title>
        <authorList>
            <person name="Gill S.R."/>
            <person name="Fouts D.E."/>
            <person name="Archer G.L."/>
            <person name="Mongodin E.F."/>
            <person name="DeBoy R.T."/>
            <person name="Ravel J."/>
            <person name="Paulsen I.T."/>
            <person name="Kolonay J.F."/>
            <person name="Brinkac L.M."/>
            <person name="Beanan M.J."/>
            <person name="Dodson R.J."/>
            <person name="Daugherty S.C."/>
            <person name="Madupu R."/>
            <person name="Angiuoli S.V."/>
            <person name="Durkin A.S."/>
            <person name="Haft D.H."/>
            <person name="Vamathevan J.J."/>
            <person name="Khouri H."/>
            <person name="Utterback T.R."/>
            <person name="Lee C."/>
            <person name="Dimitrov G."/>
            <person name="Jiang L."/>
            <person name="Qin H."/>
            <person name="Weidman J."/>
            <person name="Tran K."/>
            <person name="Kang K.H."/>
            <person name="Hance I.R."/>
            <person name="Nelson K.E."/>
            <person name="Fraser C.M."/>
        </authorList>
    </citation>
    <scope>NUCLEOTIDE SEQUENCE [LARGE SCALE GENOMIC DNA]</scope>
    <source>
        <strain>COL</strain>
    </source>
</reference>
<evidence type="ECO:0000250" key="1">
    <source>
        <dbReference type="UniProtKB" id="P77836"/>
    </source>
</evidence>
<evidence type="ECO:0000305" key="2"/>
<evidence type="ECO:0007829" key="3">
    <source>
        <dbReference type="PDB" id="3H5Q"/>
    </source>
</evidence>
<organism>
    <name type="scientific">Staphylococcus aureus (strain COL)</name>
    <dbReference type="NCBI Taxonomy" id="93062"/>
    <lineage>
        <taxon>Bacteria</taxon>
        <taxon>Bacillati</taxon>
        <taxon>Bacillota</taxon>
        <taxon>Bacilli</taxon>
        <taxon>Bacillales</taxon>
        <taxon>Staphylococcaceae</taxon>
        <taxon>Staphylococcus</taxon>
    </lineage>
</organism>
<name>PDP_STAAC</name>
<comment type="function">
    <text evidence="1">Catalyzes phosphorolysis of the pyrimidine nucleosides uridine, thymidine and 2'-deoxyuridine with the formation of the corresponding pyrimidine base and ribose-1-phosphate.</text>
</comment>
<comment type="catalytic activity">
    <reaction evidence="1">
        <text>uridine + phosphate = alpha-D-ribose 1-phosphate + uracil</text>
        <dbReference type="Rhea" id="RHEA:24388"/>
        <dbReference type="ChEBI" id="CHEBI:16704"/>
        <dbReference type="ChEBI" id="CHEBI:17568"/>
        <dbReference type="ChEBI" id="CHEBI:43474"/>
        <dbReference type="ChEBI" id="CHEBI:57720"/>
        <dbReference type="EC" id="2.4.2.2"/>
    </reaction>
</comment>
<comment type="catalytic activity">
    <reaction evidence="1">
        <text>thymidine + phosphate = 2-deoxy-alpha-D-ribose 1-phosphate + thymine</text>
        <dbReference type="Rhea" id="RHEA:16037"/>
        <dbReference type="ChEBI" id="CHEBI:17748"/>
        <dbReference type="ChEBI" id="CHEBI:17821"/>
        <dbReference type="ChEBI" id="CHEBI:43474"/>
        <dbReference type="ChEBI" id="CHEBI:57259"/>
        <dbReference type="EC" id="2.4.2.2"/>
    </reaction>
</comment>
<comment type="catalytic activity">
    <reaction evidence="1">
        <text>2'-deoxyuridine + phosphate = 2-deoxy-alpha-D-ribose 1-phosphate + uracil</text>
        <dbReference type="Rhea" id="RHEA:22824"/>
        <dbReference type="ChEBI" id="CHEBI:16450"/>
        <dbReference type="ChEBI" id="CHEBI:17568"/>
        <dbReference type="ChEBI" id="CHEBI:43474"/>
        <dbReference type="ChEBI" id="CHEBI:57259"/>
        <dbReference type="EC" id="2.4.2.2"/>
    </reaction>
</comment>
<comment type="cofactor">
    <cofactor evidence="1">
        <name>K(+)</name>
        <dbReference type="ChEBI" id="CHEBI:29103"/>
    </cofactor>
    <text evidence="1">Binds 1 K(+) ion per subunit.</text>
</comment>
<comment type="subunit">
    <text evidence="1">Homodimer.</text>
</comment>
<comment type="similarity">
    <text evidence="2">Belongs to the thymidine/pyrimidine-nucleoside phosphorylase family.</text>
</comment>
<dbReference type="EC" id="2.4.2.2"/>
<dbReference type="EMBL" id="CP000046">
    <property type="protein sequence ID" value="AAW38438.1"/>
    <property type="molecule type" value="Genomic_DNA"/>
</dbReference>
<dbReference type="RefSeq" id="WP_001242318.1">
    <property type="nucleotide sequence ID" value="NZ_JBGOFO010000007.1"/>
</dbReference>
<dbReference type="PDB" id="3H5Q">
    <property type="method" value="X-ray"/>
    <property type="resolution" value="1.94 A"/>
    <property type="chains" value="A=1-433"/>
</dbReference>
<dbReference type="PDBsum" id="3H5Q"/>
<dbReference type="SMR" id="Q5HE64"/>
<dbReference type="KEGG" id="sac:SACOL2128"/>
<dbReference type="HOGENOM" id="CLU_025040_0_1_9"/>
<dbReference type="EvolutionaryTrace" id="Q5HE64"/>
<dbReference type="Proteomes" id="UP000000530">
    <property type="component" value="Chromosome"/>
</dbReference>
<dbReference type="GO" id="GO:0005829">
    <property type="term" value="C:cytosol"/>
    <property type="evidence" value="ECO:0007669"/>
    <property type="project" value="TreeGrafter"/>
</dbReference>
<dbReference type="GO" id="GO:0004645">
    <property type="term" value="F:1,4-alpha-oligoglucan phosphorylase activity"/>
    <property type="evidence" value="ECO:0007669"/>
    <property type="project" value="InterPro"/>
</dbReference>
<dbReference type="GO" id="GO:0047847">
    <property type="term" value="F:deoxyuridine phosphorylase activity"/>
    <property type="evidence" value="ECO:0007669"/>
    <property type="project" value="RHEA"/>
</dbReference>
<dbReference type="GO" id="GO:0046872">
    <property type="term" value="F:metal ion binding"/>
    <property type="evidence" value="ECO:0007669"/>
    <property type="project" value="UniProtKB-KW"/>
</dbReference>
<dbReference type="GO" id="GO:0009032">
    <property type="term" value="F:thymidine phosphorylase activity"/>
    <property type="evidence" value="ECO:0007669"/>
    <property type="project" value="TreeGrafter"/>
</dbReference>
<dbReference type="GO" id="GO:0004850">
    <property type="term" value="F:uridine phosphorylase activity"/>
    <property type="evidence" value="ECO:0007669"/>
    <property type="project" value="RHEA"/>
</dbReference>
<dbReference type="GO" id="GO:0006206">
    <property type="term" value="P:pyrimidine nucleobase metabolic process"/>
    <property type="evidence" value="ECO:0007669"/>
    <property type="project" value="InterPro"/>
</dbReference>
<dbReference type="GO" id="GO:0006213">
    <property type="term" value="P:pyrimidine nucleoside metabolic process"/>
    <property type="evidence" value="ECO:0007669"/>
    <property type="project" value="InterPro"/>
</dbReference>
<dbReference type="FunFam" id="1.20.970.10:FF:000002">
    <property type="entry name" value="Pyrimidine-nucleoside phosphorylase"/>
    <property type="match status" value="1"/>
</dbReference>
<dbReference type="FunFam" id="3.40.1030.10:FF:000003">
    <property type="entry name" value="Pyrimidine-nucleoside phosphorylase"/>
    <property type="match status" value="1"/>
</dbReference>
<dbReference type="Gene3D" id="3.40.1030.10">
    <property type="entry name" value="Nucleoside phosphorylase/phosphoribosyltransferase catalytic domain"/>
    <property type="match status" value="1"/>
</dbReference>
<dbReference type="Gene3D" id="3.90.1170.30">
    <property type="entry name" value="Pyrimidine nucleoside phosphorylase-like, C-terminal domain"/>
    <property type="match status" value="1"/>
</dbReference>
<dbReference type="Gene3D" id="1.20.970.10">
    <property type="entry name" value="Transferase, Pyrimidine Nucleoside Phosphorylase, Chain C"/>
    <property type="match status" value="1"/>
</dbReference>
<dbReference type="InterPro" id="IPR000312">
    <property type="entry name" value="Glycosyl_Trfase_fam3"/>
</dbReference>
<dbReference type="InterPro" id="IPR017459">
    <property type="entry name" value="Glycosyl_Trfase_fam3_N_dom"/>
</dbReference>
<dbReference type="InterPro" id="IPR036320">
    <property type="entry name" value="Glycosyl_Trfase_fam3_N_dom_sf"/>
</dbReference>
<dbReference type="InterPro" id="IPR035902">
    <property type="entry name" value="Nuc_phospho_transferase"/>
</dbReference>
<dbReference type="InterPro" id="IPR036566">
    <property type="entry name" value="PYNP-like_C_sf"/>
</dbReference>
<dbReference type="InterPro" id="IPR013102">
    <property type="entry name" value="PYNP_C"/>
</dbReference>
<dbReference type="InterPro" id="IPR018090">
    <property type="entry name" value="Pyrmidine_PPas_bac/euk"/>
</dbReference>
<dbReference type="InterPro" id="IPR017872">
    <property type="entry name" value="Pyrmidine_PPase_CS"/>
</dbReference>
<dbReference type="InterPro" id="IPR000053">
    <property type="entry name" value="Thymidine/pyrmidine_PPase"/>
</dbReference>
<dbReference type="NCBIfam" id="NF004490">
    <property type="entry name" value="PRK05820.1"/>
    <property type="match status" value="1"/>
</dbReference>
<dbReference type="NCBIfam" id="NF004747">
    <property type="entry name" value="PRK06078.1"/>
    <property type="match status" value="1"/>
</dbReference>
<dbReference type="NCBIfam" id="TIGR02644">
    <property type="entry name" value="Y_phosphoryl"/>
    <property type="match status" value="1"/>
</dbReference>
<dbReference type="PANTHER" id="PTHR10515">
    <property type="entry name" value="THYMIDINE PHOSPHORYLASE"/>
    <property type="match status" value="1"/>
</dbReference>
<dbReference type="PANTHER" id="PTHR10515:SF0">
    <property type="entry name" value="THYMIDINE PHOSPHORYLASE"/>
    <property type="match status" value="1"/>
</dbReference>
<dbReference type="Pfam" id="PF02885">
    <property type="entry name" value="Glycos_trans_3N"/>
    <property type="match status" value="1"/>
</dbReference>
<dbReference type="Pfam" id="PF00591">
    <property type="entry name" value="Glycos_transf_3"/>
    <property type="match status" value="1"/>
</dbReference>
<dbReference type="Pfam" id="PF07831">
    <property type="entry name" value="PYNP_C"/>
    <property type="match status" value="1"/>
</dbReference>
<dbReference type="PIRSF" id="PIRSF000478">
    <property type="entry name" value="TP_PyNP"/>
    <property type="match status" value="1"/>
</dbReference>
<dbReference type="SMART" id="SM00941">
    <property type="entry name" value="PYNP_C"/>
    <property type="match status" value="1"/>
</dbReference>
<dbReference type="SUPFAM" id="SSF52418">
    <property type="entry name" value="Nucleoside phosphorylase/phosphoribosyltransferase catalytic domain"/>
    <property type="match status" value="1"/>
</dbReference>
<dbReference type="SUPFAM" id="SSF47648">
    <property type="entry name" value="Nucleoside phosphorylase/phosphoribosyltransferase N-terminal domain"/>
    <property type="match status" value="1"/>
</dbReference>
<dbReference type="SUPFAM" id="SSF54680">
    <property type="entry name" value="Pyrimidine nucleoside phosphorylase C-terminal domain"/>
    <property type="match status" value="1"/>
</dbReference>
<dbReference type="PROSITE" id="PS00647">
    <property type="entry name" value="THYMID_PHOSPHORYLASE"/>
    <property type="match status" value="1"/>
</dbReference>